<evidence type="ECO:0000256" key="1">
    <source>
        <dbReference type="SAM" id="MobiDB-lite"/>
    </source>
</evidence>
<evidence type="ECO:0000269" key="2">
    <source>
    </source>
</evidence>
<evidence type="ECO:0000305" key="3"/>
<feature type="chain" id="PRO_0000359766" description="Pancreatic progenitor cell differentiation and proliferation factor A">
    <location>
        <begin position="1"/>
        <end position="117"/>
    </location>
</feature>
<feature type="region of interest" description="Disordered" evidence="1">
    <location>
        <begin position="22"/>
        <end position="46"/>
    </location>
</feature>
<feature type="compositionally biased region" description="Low complexity" evidence="1">
    <location>
        <begin position="23"/>
        <end position="33"/>
    </location>
</feature>
<dbReference type="EMBL" id="BC057474">
    <property type="protein sequence ID" value="AAH57474.1"/>
    <property type="molecule type" value="mRNA"/>
</dbReference>
<dbReference type="RefSeq" id="NP_956373.1">
    <property type="nucleotide sequence ID" value="NM_200079.1"/>
</dbReference>
<dbReference type="FunCoup" id="Q6PFP3">
    <property type="interactions" value="1772"/>
</dbReference>
<dbReference type="STRING" id="7955.ENSDARP00000031112"/>
<dbReference type="PaxDb" id="7955-ENSDARP00000031112"/>
<dbReference type="Ensembl" id="ENSDART00000032996">
    <property type="protein sequence ID" value="ENSDARP00000031112"/>
    <property type="gene ID" value="ENSDARG00000007682"/>
</dbReference>
<dbReference type="GeneID" id="338304"/>
<dbReference type="KEGG" id="dre:338304"/>
<dbReference type="AGR" id="ZFIN:ZDB-GENE-030219-204"/>
<dbReference type="CTD" id="338304"/>
<dbReference type="ZFIN" id="ZDB-GENE-030219-204">
    <property type="gene designation" value="ppdpfa"/>
</dbReference>
<dbReference type="eggNOG" id="ENOG502S1KD">
    <property type="taxonomic scope" value="Eukaryota"/>
</dbReference>
<dbReference type="HOGENOM" id="CLU_157362_0_0_1"/>
<dbReference type="InParanoid" id="Q6PFP3"/>
<dbReference type="OMA" id="DSDHWWT"/>
<dbReference type="OrthoDB" id="9411431at2759"/>
<dbReference type="PhylomeDB" id="Q6PFP3"/>
<dbReference type="TreeFam" id="TF333000"/>
<dbReference type="PRO" id="PR:Q6PFP3"/>
<dbReference type="Proteomes" id="UP000000437">
    <property type="component" value="Chromosome 8"/>
</dbReference>
<dbReference type="Bgee" id="ENSDARG00000007682">
    <property type="expression patterns" value="Expressed in cardiac ventricle and 52 other cell types or tissues"/>
</dbReference>
<dbReference type="ExpressionAtlas" id="Q6PFP3">
    <property type="expression patterns" value="baseline"/>
</dbReference>
<dbReference type="GO" id="GO:0001708">
    <property type="term" value="P:cell fate specification"/>
    <property type="evidence" value="ECO:0000315"/>
    <property type="project" value="ZFIN"/>
</dbReference>
<dbReference type="GO" id="GO:0008283">
    <property type="term" value="P:cell population proliferation"/>
    <property type="evidence" value="ECO:0000315"/>
    <property type="project" value="ZFIN"/>
</dbReference>
<dbReference type="GO" id="GO:0031017">
    <property type="term" value="P:exocrine pancreas development"/>
    <property type="evidence" value="ECO:0000315"/>
    <property type="project" value="ZFIN"/>
</dbReference>
<dbReference type="InterPro" id="IPR026754">
    <property type="entry name" value="PPDPF"/>
</dbReference>
<dbReference type="PANTHER" id="PTHR14572">
    <property type="entry name" value="PANCREATIC PROGENITOR CELL DIFFERENTIATION AND PROLIFERATION FACTOR"/>
    <property type="match status" value="1"/>
</dbReference>
<dbReference type="Pfam" id="PF15060">
    <property type="entry name" value="PPDFL"/>
    <property type="match status" value="1"/>
</dbReference>
<dbReference type="PRINTS" id="PR02071">
    <property type="entry name" value="PPDPFACTOR"/>
</dbReference>
<gene>
    <name type="primary">ppdpfa</name>
    <name type="synonym">exdpf</name>
    <name type="synonym">exdpfa</name>
</gene>
<comment type="function">
    <text evidence="2">Probable regulator of exocrine pancreas development.</text>
</comment>
<comment type="tissue specificity">
    <text evidence="2">Expressed exclusively in the exocrine cells during pancreas development.</text>
</comment>
<comment type="developmental stage">
    <text evidence="2">Expressed both maternally and zygotically. Expression increases between 1 dpf and 2 dpf when the exocrine pancreas starts to develop and is highest between 2 dpf and 5 dpf. Starts to express in the pancreatic area at 33 hpf. Later in development, the strongest domain of expression appears in the pancreas. Cells expressing are located about 1 somite anterior to the cluster of preproinsulin-positive cells, just before exocrine specification begins. By 36 hpf, expressing cells start to contact the preproinsulinpositive cells as a result of gut rotation. These expressing cells continue to grow posteriorly to form a typical pancreas-like shape at 3 dpf. From 33 hpf to 3 dpf, there is no overlap between expressing cells and preproinsulinpositive cells, indicating that expression is excluded from endocrine cells. Conversely, expression completely overlaps with trypsin expression at 3 dpf.</text>
</comment>
<comment type="induction">
    <text evidence="2">Expression is directly regulated by pancreas-specific transcription factor ptf1a. Probably also regulated by retinoic acid (RA).</text>
</comment>
<comment type="disruption phenotype">
    <text evidence="2">Impaired exocrine cell differentiation and growth. Loss or significant reduction of exocrine cells are due to lineage-specific cell cycle arrest but not apoptosis. The endocrine cell mass appear normal. Cell cycle arrest is mediated by up-regulation of cell cycle inhibitor genes cdkn1a, cdkn1b, and cyclin gccng1.</text>
</comment>
<comment type="similarity">
    <text evidence="3">Belongs to the PPDPF family.</text>
</comment>
<reference key="1">
    <citation type="submission" date="2003-09" db="EMBL/GenBank/DDBJ databases">
        <authorList>
            <consortium name="NIH - Zebrafish Gene Collection (ZGC) project"/>
        </authorList>
    </citation>
    <scope>NUCLEOTIDE SEQUENCE [LARGE SCALE MRNA]</scope>
    <source>
        <strain>SJD</strain>
    </source>
</reference>
<reference key="2">
    <citation type="journal article" date="2008" name="PLoS Biol.">
        <title>Exdpf is a key regulator of exocrine pancreas development controlled by retinoic acid and ptf1a in zebrafish.</title>
        <authorList>
            <person name="Jiang Z."/>
            <person name="Song J."/>
            <person name="Qi F."/>
            <person name="Xiao A."/>
            <person name="An X."/>
            <person name="Liu N.-A."/>
            <person name="Zhu Z."/>
            <person name="Zhang B."/>
            <person name="Lin S."/>
        </authorList>
    </citation>
    <scope>FUNCTION</scope>
    <scope>TISSUE SPECIFICITY</scope>
    <scope>DEVELOPMENTAL STAGE</scope>
    <scope>DISRUPTION PHENOTYPE</scope>
    <scope>INDUCTION</scope>
</reference>
<proteinExistence type="evidence at transcript level"/>
<name>PDPFA_DANRE</name>
<organism>
    <name type="scientific">Danio rerio</name>
    <name type="common">Zebrafish</name>
    <name type="synonym">Brachydanio rerio</name>
    <dbReference type="NCBI Taxonomy" id="7955"/>
    <lineage>
        <taxon>Eukaryota</taxon>
        <taxon>Metazoa</taxon>
        <taxon>Chordata</taxon>
        <taxon>Craniata</taxon>
        <taxon>Vertebrata</taxon>
        <taxon>Euteleostomi</taxon>
        <taxon>Actinopterygii</taxon>
        <taxon>Neopterygii</taxon>
        <taxon>Teleostei</taxon>
        <taxon>Ostariophysi</taxon>
        <taxon>Cypriniformes</taxon>
        <taxon>Danionidae</taxon>
        <taxon>Danioninae</taxon>
        <taxon>Danio</taxon>
    </lineage>
</organism>
<accession>Q6PFP3</accession>
<keyword id="KW-0217">Developmental protein</keyword>
<keyword id="KW-0221">Differentiation</keyword>
<keyword id="KW-1185">Reference proteome</keyword>
<sequence length="117" mass="12645">MAAIPSSGSLIATHDYYRRRIGSTSSNSSCSSSEYTGEVIPHPPGLARQDSGHWWSSFFFGKQNQMGTPNGFESQQKTGTYTVTNGQVTCVAREIVMKRHLSESSDSGKEPGSPLPS</sequence>
<protein>
    <recommendedName>
        <fullName>Pancreatic progenitor cell differentiation and proliferation factor A</fullName>
    </recommendedName>
    <alternativeName>
        <fullName>Exocrine differentiation and proliferation factor A</fullName>
        <shortName>Exocrine differentiation and proliferation factor</shortName>
    </alternativeName>
</protein>